<feature type="chain" id="PRO_0000366296" description="UPF0735 ACT domain-containing protein Csac_0995">
    <location>
        <begin position="1"/>
        <end position="150"/>
    </location>
</feature>
<feature type="domain" description="ACT" evidence="1">
    <location>
        <begin position="72"/>
        <end position="147"/>
    </location>
</feature>
<reference key="1">
    <citation type="submission" date="2007-04" db="EMBL/GenBank/DDBJ databases">
        <title>Genome sequence of the thermophilic hydrogen-producing bacterium Caldicellulosiruptor saccharolyticus DSM 8903.</title>
        <authorList>
            <person name="Copeland A."/>
            <person name="Lucas S."/>
            <person name="Lapidus A."/>
            <person name="Barry K."/>
            <person name="Detter J.C."/>
            <person name="Glavina del Rio T."/>
            <person name="Hammon N."/>
            <person name="Israni S."/>
            <person name="Dalin E."/>
            <person name="Tice H."/>
            <person name="Pitluck S."/>
            <person name="Kiss H."/>
            <person name="Brettin T."/>
            <person name="Bruce D."/>
            <person name="Han C."/>
            <person name="Schmutz J."/>
            <person name="Larimer F."/>
            <person name="Land M."/>
            <person name="Hauser L."/>
            <person name="Kyrpides N."/>
            <person name="Lykidis A."/>
            <person name="van de Werken H.J.G."/>
            <person name="Verhaart M.R.A."/>
            <person name="VanFossen A.L."/>
            <person name="Lewis D.L."/>
            <person name="Nichols J.D."/>
            <person name="Goorissen H.P."/>
            <person name="van Niel E.W.J."/>
            <person name="Stams F.J.M."/>
            <person name="Willquist K.U."/>
            <person name="Ward D.E."/>
            <person name="van der Oost J."/>
            <person name="Kelly R.M."/>
            <person name="Kengen S.M.W."/>
            <person name="Richardson P."/>
        </authorList>
    </citation>
    <scope>NUCLEOTIDE SEQUENCE [LARGE SCALE GENOMIC DNA]</scope>
    <source>
        <strain>ATCC 43494 / DSM 8903 / Tp8T 6331</strain>
    </source>
</reference>
<organism>
    <name type="scientific">Caldicellulosiruptor saccharolyticus (strain ATCC 43494 / DSM 8903 / Tp8T 6331)</name>
    <dbReference type="NCBI Taxonomy" id="351627"/>
    <lineage>
        <taxon>Bacteria</taxon>
        <taxon>Bacillati</taxon>
        <taxon>Bacillota</taxon>
        <taxon>Bacillota incertae sedis</taxon>
        <taxon>Caldicellulosiruptorales</taxon>
        <taxon>Caldicellulosiruptoraceae</taxon>
        <taxon>Caldicellulosiruptor</taxon>
    </lineage>
</organism>
<proteinExistence type="inferred from homology"/>
<evidence type="ECO:0000255" key="1">
    <source>
        <dbReference type="HAMAP-Rule" id="MF_00707"/>
    </source>
</evidence>
<evidence type="ECO:0000305" key="2"/>
<comment type="similarity">
    <text evidence="1">Belongs to the UPF0735 family.</text>
</comment>
<comment type="sequence caution" evidence="2">
    <conflict type="erroneous termination">
        <sequence resource="EMBL-CDS" id="ABP66609"/>
    </conflict>
    <text>Truncated C-terminus.</text>
</comment>
<dbReference type="EMBL" id="CP000679">
    <property type="protein sequence ID" value="ABP66609.1"/>
    <property type="status" value="ALT_SEQ"/>
    <property type="molecule type" value="Genomic_DNA"/>
</dbReference>
<dbReference type="STRING" id="351627.Csac_0995"/>
<dbReference type="KEGG" id="csc:Csac_0995"/>
<dbReference type="eggNOG" id="COG4492">
    <property type="taxonomic scope" value="Bacteria"/>
</dbReference>
<dbReference type="HOGENOM" id="CLU_128147_1_0_9"/>
<dbReference type="Proteomes" id="UP000000256">
    <property type="component" value="Chromosome"/>
</dbReference>
<dbReference type="CDD" id="cd04888">
    <property type="entry name" value="ACT_PheB-BS"/>
    <property type="match status" value="1"/>
</dbReference>
<dbReference type="Gene3D" id="3.30.70.260">
    <property type="match status" value="1"/>
</dbReference>
<dbReference type="HAMAP" id="MF_00707">
    <property type="entry name" value="UPF0735"/>
    <property type="match status" value="1"/>
</dbReference>
<dbReference type="InterPro" id="IPR045865">
    <property type="entry name" value="ACT-like_dom_sf"/>
</dbReference>
<dbReference type="InterPro" id="IPR002912">
    <property type="entry name" value="ACT_dom"/>
</dbReference>
<dbReference type="InterPro" id="IPR008310">
    <property type="entry name" value="UPF0735_ACT_dom-cont"/>
</dbReference>
<dbReference type="NCBIfam" id="NF003361">
    <property type="entry name" value="PRK04435.1"/>
    <property type="match status" value="1"/>
</dbReference>
<dbReference type="Pfam" id="PF01842">
    <property type="entry name" value="ACT"/>
    <property type="match status" value="1"/>
</dbReference>
<dbReference type="PIRSF" id="PIRSF025624">
    <property type="entry name" value="ACT_PheB"/>
    <property type="match status" value="1"/>
</dbReference>
<dbReference type="SUPFAM" id="SSF55021">
    <property type="entry name" value="ACT-like"/>
    <property type="match status" value="1"/>
</dbReference>
<dbReference type="PROSITE" id="PS51671">
    <property type="entry name" value="ACT"/>
    <property type="match status" value="1"/>
</dbReference>
<name>Y995_CALS8</name>
<protein>
    <recommendedName>
        <fullName evidence="1">UPF0735 ACT domain-containing protein Csac_0995</fullName>
    </recommendedName>
</protein>
<gene>
    <name type="ordered locus">Csac_0995</name>
</gene>
<sequence length="150" mass="16804">MLKKDATYYIVEESVLPEVFLKVIKAKELLEKGEVKAVNEAVRLVGISRSAFYKYKDCIFPFFESSRGKIITLALVLQDVPGILSKILNIISDTNANILTINQNIPLGGIATVTISIRTSDMTKSVKELIQEIERVDGVKKIEILGREEY</sequence>
<accession>A4XI74</accession>